<comment type="similarity">
    <text evidence="1">Belongs to the elongation factor P family.</text>
</comment>
<keyword id="KW-1185">Reference proteome</keyword>
<name>EFPL_CITK8</name>
<feature type="chain" id="PRO_1000056945" description="Elongation factor P-like protein">
    <location>
        <begin position="1"/>
        <end position="190"/>
    </location>
</feature>
<proteinExistence type="inferred from homology"/>
<dbReference type="EMBL" id="CP000822">
    <property type="protein sequence ID" value="ABV11764.1"/>
    <property type="molecule type" value="Genomic_DNA"/>
</dbReference>
<dbReference type="SMR" id="A8AE51"/>
<dbReference type="STRING" id="290338.CKO_00610"/>
<dbReference type="KEGG" id="cko:CKO_00610"/>
<dbReference type="HOGENOM" id="CLU_074944_2_0_6"/>
<dbReference type="OrthoDB" id="5599402at2"/>
<dbReference type="Proteomes" id="UP000008148">
    <property type="component" value="Chromosome"/>
</dbReference>
<dbReference type="GO" id="GO:0005829">
    <property type="term" value="C:cytosol"/>
    <property type="evidence" value="ECO:0007669"/>
    <property type="project" value="UniProtKB-ARBA"/>
</dbReference>
<dbReference type="GO" id="GO:0003746">
    <property type="term" value="F:translation elongation factor activity"/>
    <property type="evidence" value="ECO:0007669"/>
    <property type="project" value="UniProtKB-UniRule"/>
</dbReference>
<dbReference type="GO" id="GO:0043043">
    <property type="term" value="P:peptide biosynthetic process"/>
    <property type="evidence" value="ECO:0007669"/>
    <property type="project" value="InterPro"/>
</dbReference>
<dbReference type="CDD" id="cd04470">
    <property type="entry name" value="S1_EF-P_repeat_1"/>
    <property type="match status" value="1"/>
</dbReference>
<dbReference type="CDD" id="cd05794">
    <property type="entry name" value="S1_EF-P_repeat_2"/>
    <property type="match status" value="1"/>
</dbReference>
<dbReference type="FunFam" id="2.40.50.140:FF:000004">
    <property type="entry name" value="Elongation factor P"/>
    <property type="match status" value="1"/>
</dbReference>
<dbReference type="FunFam" id="2.30.30.30:FF:000011">
    <property type="entry name" value="Elongation factor P-like protein"/>
    <property type="match status" value="1"/>
</dbReference>
<dbReference type="FunFam" id="2.40.50.140:FF:000053">
    <property type="entry name" value="Elongation factor P-like protein"/>
    <property type="match status" value="1"/>
</dbReference>
<dbReference type="Gene3D" id="2.30.30.30">
    <property type="match status" value="1"/>
</dbReference>
<dbReference type="Gene3D" id="2.40.50.140">
    <property type="entry name" value="Nucleic acid-binding proteins"/>
    <property type="match status" value="2"/>
</dbReference>
<dbReference type="HAMAP" id="MF_00646">
    <property type="entry name" value="EFP"/>
    <property type="match status" value="1"/>
</dbReference>
<dbReference type="InterPro" id="IPR015365">
    <property type="entry name" value="Elong-fact-P_C"/>
</dbReference>
<dbReference type="InterPro" id="IPR012340">
    <property type="entry name" value="NA-bd_OB-fold"/>
</dbReference>
<dbReference type="InterPro" id="IPR014722">
    <property type="entry name" value="Rib_uL2_dom2"/>
</dbReference>
<dbReference type="InterPro" id="IPR020599">
    <property type="entry name" value="Transl_elong_fac_P/YeiP"/>
</dbReference>
<dbReference type="InterPro" id="IPR013185">
    <property type="entry name" value="Transl_elong_KOW-like"/>
</dbReference>
<dbReference type="InterPro" id="IPR011897">
    <property type="entry name" value="Transl_elong_p-like_YeiP"/>
</dbReference>
<dbReference type="InterPro" id="IPR001059">
    <property type="entry name" value="Transl_elong_P/YeiP_cen"/>
</dbReference>
<dbReference type="InterPro" id="IPR013852">
    <property type="entry name" value="Transl_elong_P/YeiP_CS"/>
</dbReference>
<dbReference type="InterPro" id="IPR008991">
    <property type="entry name" value="Translation_prot_SH3-like_sf"/>
</dbReference>
<dbReference type="NCBIfam" id="NF001810">
    <property type="entry name" value="PRK00529.1"/>
    <property type="match status" value="1"/>
</dbReference>
<dbReference type="NCBIfam" id="NF003392">
    <property type="entry name" value="PRK04542.1"/>
    <property type="match status" value="1"/>
</dbReference>
<dbReference type="NCBIfam" id="TIGR02178">
    <property type="entry name" value="yeiP"/>
    <property type="match status" value="1"/>
</dbReference>
<dbReference type="PANTHER" id="PTHR30053">
    <property type="entry name" value="ELONGATION FACTOR P"/>
    <property type="match status" value="1"/>
</dbReference>
<dbReference type="PANTHER" id="PTHR30053:SF14">
    <property type="entry name" value="TRANSLATION ELONGATION FACTOR KOW-LIKE DOMAIN-CONTAINING PROTEIN"/>
    <property type="match status" value="1"/>
</dbReference>
<dbReference type="Pfam" id="PF01132">
    <property type="entry name" value="EFP"/>
    <property type="match status" value="1"/>
</dbReference>
<dbReference type="Pfam" id="PF08207">
    <property type="entry name" value="EFP_N"/>
    <property type="match status" value="1"/>
</dbReference>
<dbReference type="Pfam" id="PF09285">
    <property type="entry name" value="Elong-fact-P_C"/>
    <property type="match status" value="1"/>
</dbReference>
<dbReference type="PIRSF" id="PIRSF005901">
    <property type="entry name" value="EF-P"/>
    <property type="match status" value="1"/>
</dbReference>
<dbReference type="SMART" id="SM01185">
    <property type="entry name" value="EFP"/>
    <property type="match status" value="1"/>
</dbReference>
<dbReference type="SMART" id="SM00841">
    <property type="entry name" value="Elong-fact-P_C"/>
    <property type="match status" value="1"/>
</dbReference>
<dbReference type="SUPFAM" id="SSF50249">
    <property type="entry name" value="Nucleic acid-binding proteins"/>
    <property type="match status" value="2"/>
</dbReference>
<dbReference type="SUPFAM" id="SSF50104">
    <property type="entry name" value="Translation proteins SH3-like domain"/>
    <property type="match status" value="1"/>
</dbReference>
<dbReference type="PROSITE" id="PS01275">
    <property type="entry name" value="EFP"/>
    <property type="match status" value="1"/>
</dbReference>
<reference key="1">
    <citation type="submission" date="2007-08" db="EMBL/GenBank/DDBJ databases">
        <authorList>
            <consortium name="The Citrobacter koseri Genome Sequencing Project"/>
            <person name="McClelland M."/>
            <person name="Sanderson E.K."/>
            <person name="Porwollik S."/>
            <person name="Spieth J."/>
            <person name="Clifton W.S."/>
            <person name="Latreille P."/>
            <person name="Courtney L."/>
            <person name="Wang C."/>
            <person name="Pepin K."/>
            <person name="Bhonagiri V."/>
            <person name="Nash W."/>
            <person name="Johnson M."/>
            <person name="Thiruvilangam P."/>
            <person name="Wilson R."/>
        </authorList>
    </citation>
    <scope>NUCLEOTIDE SEQUENCE [LARGE SCALE GENOMIC DNA]</scope>
    <source>
        <strain>ATCC BAA-895 / CDC 4225-83 / SGSC4696</strain>
    </source>
</reference>
<organism>
    <name type="scientific">Citrobacter koseri (strain ATCC BAA-895 / CDC 4225-83 / SGSC4696)</name>
    <dbReference type="NCBI Taxonomy" id="290338"/>
    <lineage>
        <taxon>Bacteria</taxon>
        <taxon>Pseudomonadati</taxon>
        <taxon>Pseudomonadota</taxon>
        <taxon>Gammaproteobacteria</taxon>
        <taxon>Enterobacterales</taxon>
        <taxon>Enterobacteriaceae</taxon>
        <taxon>Citrobacter</taxon>
    </lineage>
</organism>
<gene>
    <name type="ordered locus">CKO_00610</name>
</gene>
<accession>A8AE51</accession>
<protein>
    <recommendedName>
        <fullName evidence="1">Elongation factor P-like protein</fullName>
    </recommendedName>
</protein>
<evidence type="ECO:0000255" key="1">
    <source>
        <dbReference type="HAMAP-Rule" id="MF_00646"/>
    </source>
</evidence>
<sequence length="190" mass="21382">MPRANEIKKGMVLNYNGKLLIVKDIDIQSPTARGAATLYKMRFSDVRTGLKVEERFKGDDIVDTVTLSRRGVDFSYIDGNEYVFMDKEDYTPYTFTKDQIEEELLFIPEGGMPDMQVLTWDGQLLALELPQTVDLEIVETAPGIKGASASARNKPATLSTGLVIQVPEYLSAGEKIRIHIEERRYMGRAD</sequence>